<dbReference type="EC" id="2.4.99.28" evidence="1"/>
<dbReference type="EMBL" id="CU928162">
    <property type="protein sequence ID" value="CAV17957.1"/>
    <property type="molecule type" value="Genomic_DNA"/>
</dbReference>
<dbReference type="RefSeq" id="WP_000047068.1">
    <property type="nucleotide sequence ID" value="NC_011745.1"/>
</dbReference>
<dbReference type="SMR" id="B7N364"/>
<dbReference type="CAZy" id="GT51">
    <property type="family name" value="Glycosyltransferase Family 51"/>
</dbReference>
<dbReference type="KEGG" id="ecq:ECED1_3866"/>
<dbReference type="HOGENOM" id="CLU_006354_1_1_6"/>
<dbReference type="UniPathway" id="UPA00219"/>
<dbReference type="Proteomes" id="UP000000748">
    <property type="component" value="Chromosome"/>
</dbReference>
<dbReference type="GO" id="GO:0009274">
    <property type="term" value="C:peptidoglycan-based cell wall"/>
    <property type="evidence" value="ECO:0007669"/>
    <property type="project" value="InterPro"/>
</dbReference>
<dbReference type="GO" id="GO:0005886">
    <property type="term" value="C:plasma membrane"/>
    <property type="evidence" value="ECO:0007669"/>
    <property type="project" value="UniProtKB-SubCell"/>
</dbReference>
<dbReference type="GO" id="GO:0016763">
    <property type="term" value="F:pentosyltransferase activity"/>
    <property type="evidence" value="ECO:0007669"/>
    <property type="project" value="InterPro"/>
</dbReference>
<dbReference type="GO" id="GO:0008955">
    <property type="term" value="F:peptidoglycan glycosyltransferase activity"/>
    <property type="evidence" value="ECO:0007669"/>
    <property type="project" value="UniProtKB-UniRule"/>
</dbReference>
<dbReference type="GO" id="GO:0071555">
    <property type="term" value="P:cell wall organization"/>
    <property type="evidence" value="ECO:0007669"/>
    <property type="project" value="UniProtKB-KW"/>
</dbReference>
<dbReference type="GO" id="GO:0009252">
    <property type="term" value="P:peptidoglycan biosynthetic process"/>
    <property type="evidence" value="ECO:0007669"/>
    <property type="project" value="UniProtKB-UniRule"/>
</dbReference>
<dbReference type="GO" id="GO:0008360">
    <property type="term" value="P:regulation of cell shape"/>
    <property type="evidence" value="ECO:0007669"/>
    <property type="project" value="UniProtKB-KW"/>
</dbReference>
<dbReference type="FunFam" id="1.10.3810.10:FF:000004">
    <property type="entry name" value="Biosynthetic peptidoglycan transglycosylase"/>
    <property type="match status" value="1"/>
</dbReference>
<dbReference type="Gene3D" id="1.10.3810.10">
    <property type="entry name" value="Biosynthetic peptidoglycan transglycosylase-like"/>
    <property type="match status" value="1"/>
</dbReference>
<dbReference type="HAMAP" id="MF_00766">
    <property type="entry name" value="PGT_MtgA"/>
    <property type="match status" value="1"/>
</dbReference>
<dbReference type="InterPro" id="IPR001264">
    <property type="entry name" value="Glyco_trans_51"/>
</dbReference>
<dbReference type="InterPro" id="IPR023346">
    <property type="entry name" value="Lysozyme-like_dom_sf"/>
</dbReference>
<dbReference type="InterPro" id="IPR036950">
    <property type="entry name" value="PBP_transglycosylase"/>
</dbReference>
<dbReference type="InterPro" id="IPR011812">
    <property type="entry name" value="Pep_trsgly"/>
</dbReference>
<dbReference type="NCBIfam" id="TIGR02070">
    <property type="entry name" value="mono_pep_trsgly"/>
    <property type="match status" value="1"/>
</dbReference>
<dbReference type="PANTHER" id="PTHR30400:SF0">
    <property type="entry name" value="BIOSYNTHETIC PEPTIDOGLYCAN TRANSGLYCOSYLASE"/>
    <property type="match status" value="1"/>
</dbReference>
<dbReference type="PANTHER" id="PTHR30400">
    <property type="entry name" value="MONOFUNCTIONAL BIOSYNTHETIC PEPTIDOGLYCAN TRANSGLYCOSYLASE"/>
    <property type="match status" value="1"/>
</dbReference>
<dbReference type="Pfam" id="PF00912">
    <property type="entry name" value="Transgly"/>
    <property type="match status" value="1"/>
</dbReference>
<dbReference type="SUPFAM" id="SSF53955">
    <property type="entry name" value="Lysozyme-like"/>
    <property type="match status" value="1"/>
</dbReference>
<sequence length="242" mass="27310">MSKSRLTVFSFVRRFLLRLMVVLAIFWGGGIALFSVAPVPFSAVMVERQVSAWLHGNFRYVAHSDWVSMDQISPWMGLAVIAAEDQKFPEHWGFDVASIEQALAHNERNENRIRGASTISQQTAKNLFLWDGRSWVRKGLEAGLTLGIETVWSKKRILAVYLNIAEFGDGVFGVEAAAQRYFHKPASKLTRSEAALLAAVLPNPLRFKVSAPSGYVRSRQAWILRQMYQLGGEPFMQQHQLD</sequence>
<name>MTGA_ECO81</name>
<proteinExistence type="inferred from homology"/>
<evidence type="ECO:0000255" key="1">
    <source>
        <dbReference type="HAMAP-Rule" id="MF_00766"/>
    </source>
</evidence>
<reference key="1">
    <citation type="journal article" date="2009" name="PLoS Genet.">
        <title>Organised genome dynamics in the Escherichia coli species results in highly diverse adaptive paths.</title>
        <authorList>
            <person name="Touchon M."/>
            <person name="Hoede C."/>
            <person name="Tenaillon O."/>
            <person name="Barbe V."/>
            <person name="Baeriswyl S."/>
            <person name="Bidet P."/>
            <person name="Bingen E."/>
            <person name="Bonacorsi S."/>
            <person name="Bouchier C."/>
            <person name="Bouvet O."/>
            <person name="Calteau A."/>
            <person name="Chiapello H."/>
            <person name="Clermont O."/>
            <person name="Cruveiller S."/>
            <person name="Danchin A."/>
            <person name="Diard M."/>
            <person name="Dossat C."/>
            <person name="Karoui M.E."/>
            <person name="Frapy E."/>
            <person name="Garry L."/>
            <person name="Ghigo J.M."/>
            <person name="Gilles A.M."/>
            <person name="Johnson J."/>
            <person name="Le Bouguenec C."/>
            <person name="Lescat M."/>
            <person name="Mangenot S."/>
            <person name="Martinez-Jehanne V."/>
            <person name="Matic I."/>
            <person name="Nassif X."/>
            <person name="Oztas S."/>
            <person name="Petit M.A."/>
            <person name="Pichon C."/>
            <person name="Rouy Z."/>
            <person name="Ruf C.S."/>
            <person name="Schneider D."/>
            <person name="Tourret J."/>
            <person name="Vacherie B."/>
            <person name="Vallenet D."/>
            <person name="Medigue C."/>
            <person name="Rocha E.P.C."/>
            <person name="Denamur E."/>
        </authorList>
    </citation>
    <scope>NUCLEOTIDE SEQUENCE [LARGE SCALE GENOMIC DNA]</scope>
    <source>
        <strain>ED1a</strain>
    </source>
</reference>
<comment type="function">
    <text evidence="1">Peptidoglycan polymerase that catalyzes glycan chain elongation from lipid-linked precursors.</text>
</comment>
<comment type="catalytic activity">
    <reaction evidence="1">
        <text>[GlcNAc-(1-&gt;4)-Mur2Ac(oyl-L-Ala-gamma-D-Glu-L-Lys-D-Ala-D-Ala)](n)-di-trans,octa-cis-undecaprenyl diphosphate + beta-D-GlcNAc-(1-&gt;4)-Mur2Ac(oyl-L-Ala-gamma-D-Glu-L-Lys-D-Ala-D-Ala)-di-trans,octa-cis-undecaprenyl diphosphate = [GlcNAc-(1-&gt;4)-Mur2Ac(oyl-L-Ala-gamma-D-Glu-L-Lys-D-Ala-D-Ala)](n+1)-di-trans,octa-cis-undecaprenyl diphosphate + di-trans,octa-cis-undecaprenyl diphosphate + H(+)</text>
        <dbReference type="Rhea" id="RHEA:23708"/>
        <dbReference type="Rhea" id="RHEA-COMP:9602"/>
        <dbReference type="Rhea" id="RHEA-COMP:9603"/>
        <dbReference type="ChEBI" id="CHEBI:15378"/>
        <dbReference type="ChEBI" id="CHEBI:58405"/>
        <dbReference type="ChEBI" id="CHEBI:60033"/>
        <dbReference type="ChEBI" id="CHEBI:78435"/>
        <dbReference type="EC" id="2.4.99.28"/>
    </reaction>
</comment>
<comment type="pathway">
    <text evidence="1">Cell wall biogenesis; peptidoglycan biosynthesis.</text>
</comment>
<comment type="subcellular location">
    <subcellularLocation>
        <location evidence="1">Cell inner membrane</location>
        <topology evidence="1">Single-pass membrane protein</topology>
    </subcellularLocation>
</comment>
<comment type="similarity">
    <text evidence="1">Belongs to the glycosyltransferase 51 family.</text>
</comment>
<protein>
    <recommendedName>
        <fullName evidence="1">Biosynthetic peptidoglycan transglycosylase</fullName>
        <ecNumber evidence="1">2.4.99.28</ecNumber>
    </recommendedName>
    <alternativeName>
        <fullName evidence="1">Glycan polymerase</fullName>
    </alternativeName>
    <alternativeName>
        <fullName evidence="1">Peptidoglycan glycosyltransferase MtgA</fullName>
        <shortName evidence="1">PGT</shortName>
    </alternativeName>
</protein>
<organism>
    <name type="scientific">Escherichia coli O81 (strain ED1a)</name>
    <dbReference type="NCBI Taxonomy" id="585397"/>
    <lineage>
        <taxon>Bacteria</taxon>
        <taxon>Pseudomonadati</taxon>
        <taxon>Pseudomonadota</taxon>
        <taxon>Gammaproteobacteria</taxon>
        <taxon>Enterobacterales</taxon>
        <taxon>Enterobacteriaceae</taxon>
        <taxon>Escherichia</taxon>
    </lineage>
</organism>
<gene>
    <name evidence="1" type="primary">mtgA</name>
    <name type="ordered locus">ECED1_3866</name>
</gene>
<feature type="chain" id="PRO_1000148435" description="Biosynthetic peptidoglycan transglycosylase">
    <location>
        <begin position="1"/>
        <end position="242"/>
    </location>
</feature>
<feature type="transmembrane region" description="Helical" evidence="1">
    <location>
        <begin position="19"/>
        <end position="39"/>
    </location>
</feature>
<accession>B7N364</accession>
<keyword id="KW-0997">Cell inner membrane</keyword>
<keyword id="KW-1003">Cell membrane</keyword>
<keyword id="KW-0133">Cell shape</keyword>
<keyword id="KW-0961">Cell wall biogenesis/degradation</keyword>
<keyword id="KW-0328">Glycosyltransferase</keyword>
<keyword id="KW-0472">Membrane</keyword>
<keyword id="KW-0573">Peptidoglycan synthesis</keyword>
<keyword id="KW-0808">Transferase</keyword>
<keyword id="KW-0812">Transmembrane</keyword>
<keyword id="KW-1133">Transmembrane helix</keyword>